<accession>Q9SXC9</accession>
<reference key="1">
    <citation type="journal article" date="2000" name="Nature">
        <title>Sequence and analysis of chromosome 1 of the plant Arabidopsis thaliana.</title>
        <authorList>
            <person name="Theologis A."/>
            <person name="Ecker J.R."/>
            <person name="Palm C.J."/>
            <person name="Federspiel N.A."/>
            <person name="Kaul S."/>
            <person name="White O."/>
            <person name="Alonso J."/>
            <person name="Altafi H."/>
            <person name="Araujo R."/>
            <person name="Bowman C.L."/>
            <person name="Brooks S.Y."/>
            <person name="Buehler E."/>
            <person name="Chan A."/>
            <person name="Chao Q."/>
            <person name="Chen H."/>
            <person name="Cheuk R.F."/>
            <person name="Chin C.W."/>
            <person name="Chung M.K."/>
            <person name="Conn L."/>
            <person name="Conway A.B."/>
            <person name="Conway A.R."/>
            <person name="Creasy T.H."/>
            <person name="Dewar K."/>
            <person name="Dunn P."/>
            <person name="Etgu P."/>
            <person name="Feldblyum T.V."/>
            <person name="Feng J.-D."/>
            <person name="Fong B."/>
            <person name="Fujii C.Y."/>
            <person name="Gill J.E."/>
            <person name="Goldsmith A.D."/>
            <person name="Haas B."/>
            <person name="Hansen N.F."/>
            <person name="Hughes B."/>
            <person name="Huizar L."/>
            <person name="Hunter J.L."/>
            <person name="Jenkins J."/>
            <person name="Johnson-Hopson C."/>
            <person name="Khan S."/>
            <person name="Khaykin E."/>
            <person name="Kim C.J."/>
            <person name="Koo H.L."/>
            <person name="Kremenetskaia I."/>
            <person name="Kurtz D.B."/>
            <person name="Kwan A."/>
            <person name="Lam B."/>
            <person name="Langin-Hooper S."/>
            <person name="Lee A."/>
            <person name="Lee J.M."/>
            <person name="Lenz C.A."/>
            <person name="Li J.H."/>
            <person name="Li Y.-P."/>
            <person name="Lin X."/>
            <person name="Liu S.X."/>
            <person name="Liu Z.A."/>
            <person name="Luros J.S."/>
            <person name="Maiti R."/>
            <person name="Marziali A."/>
            <person name="Militscher J."/>
            <person name="Miranda M."/>
            <person name="Nguyen M."/>
            <person name="Nierman W.C."/>
            <person name="Osborne B.I."/>
            <person name="Pai G."/>
            <person name="Peterson J."/>
            <person name="Pham P.K."/>
            <person name="Rizzo M."/>
            <person name="Rooney T."/>
            <person name="Rowley D."/>
            <person name="Sakano H."/>
            <person name="Salzberg S.L."/>
            <person name="Schwartz J.R."/>
            <person name="Shinn P."/>
            <person name="Southwick A.M."/>
            <person name="Sun H."/>
            <person name="Tallon L.J."/>
            <person name="Tambunga G."/>
            <person name="Toriumi M.J."/>
            <person name="Town C.D."/>
            <person name="Utterback T."/>
            <person name="Van Aken S."/>
            <person name="Vaysberg M."/>
            <person name="Vysotskaia V.S."/>
            <person name="Walker M."/>
            <person name="Wu D."/>
            <person name="Yu G."/>
            <person name="Fraser C.M."/>
            <person name="Venter J.C."/>
            <person name="Davis R.W."/>
        </authorList>
    </citation>
    <scope>NUCLEOTIDE SEQUENCE [LARGE SCALE GENOMIC DNA]</scope>
    <source>
        <strain>cv. Columbia</strain>
    </source>
</reference>
<reference key="2">
    <citation type="journal article" date="2017" name="Plant J.">
        <title>Araport11: a complete reannotation of the Arabidopsis thaliana reference genome.</title>
        <authorList>
            <person name="Cheng C.Y."/>
            <person name="Krishnakumar V."/>
            <person name="Chan A.P."/>
            <person name="Thibaud-Nissen F."/>
            <person name="Schobel S."/>
            <person name="Town C.D."/>
        </authorList>
    </citation>
    <scope>GENOME REANNOTATION</scope>
    <source>
        <strain>cv. Columbia</strain>
    </source>
</reference>
<reference key="3">
    <citation type="journal article" date="2003" name="Science">
        <title>Empirical analysis of transcriptional activity in the Arabidopsis genome.</title>
        <authorList>
            <person name="Yamada K."/>
            <person name="Lim J."/>
            <person name="Dale J.M."/>
            <person name="Chen H."/>
            <person name="Shinn P."/>
            <person name="Palm C.J."/>
            <person name="Southwick A.M."/>
            <person name="Wu H.C."/>
            <person name="Kim C.J."/>
            <person name="Nguyen M."/>
            <person name="Pham P.K."/>
            <person name="Cheuk R.F."/>
            <person name="Karlin-Newmann G."/>
            <person name="Liu S.X."/>
            <person name="Lam B."/>
            <person name="Sakano H."/>
            <person name="Wu T."/>
            <person name="Yu G."/>
            <person name="Miranda M."/>
            <person name="Quach H.L."/>
            <person name="Tripp M."/>
            <person name="Chang C.H."/>
            <person name="Lee J.M."/>
            <person name="Toriumi M.J."/>
            <person name="Chan M.M."/>
            <person name="Tang C.C."/>
            <person name="Onodera C.S."/>
            <person name="Deng J.M."/>
            <person name="Akiyama K."/>
            <person name="Ansari Y."/>
            <person name="Arakawa T."/>
            <person name="Banh J."/>
            <person name="Banno F."/>
            <person name="Bowser L."/>
            <person name="Brooks S.Y."/>
            <person name="Carninci P."/>
            <person name="Chao Q."/>
            <person name="Choy N."/>
            <person name="Enju A."/>
            <person name="Goldsmith A.D."/>
            <person name="Gurjal M."/>
            <person name="Hansen N.F."/>
            <person name="Hayashizaki Y."/>
            <person name="Johnson-Hopson C."/>
            <person name="Hsuan V.W."/>
            <person name="Iida K."/>
            <person name="Karnes M."/>
            <person name="Khan S."/>
            <person name="Koesema E."/>
            <person name="Ishida J."/>
            <person name="Jiang P.X."/>
            <person name="Jones T."/>
            <person name="Kawai J."/>
            <person name="Kamiya A."/>
            <person name="Meyers C."/>
            <person name="Nakajima M."/>
            <person name="Narusaka M."/>
            <person name="Seki M."/>
            <person name="Sakurai T."/>
            <person name="Satou M."/>
            <person name="Tamse R."/>
            <person name="Vaysberg M."/>
            <person name="Wallender E.K."/>
            <person name="Wong C."/>
            <person name="Yamamura Y."/>
            <person name="Yuan S."/>
            <person name="Shinozaki K."/>
            <person name="Davis R.W."/>
            <person name="Theologis A."/>
            <person name="Ecker J.R."/>
        </authorList>
    </citation>
    <scope>NUCLEOTIDE SEQUENCE [LARGE SCALE MRNA]</scope>
    <source>
        <strain>cv. Columbia</strain>
    </source>
</reference>
<reference key="4">
    <citation type="journal article" date="2009" name="Plant Cell">
        <title>Class I alpha-mannosidases are required for N-glycan processing and root development in Arabidopsis thaliana.</title>
        <authorList>
            <person name="Liebminger E."/>
            <person name="Huttner S."/>
            <person name="Vavra U."/>
            <person name="Fischl R."/>
            <person name="Schoberer J."/>
            <person name="Grass J."/>
            <person name="Blaukopf C."/>
            <person name="Seifert G.J."/>
            <person name="Altmann F."/>
            <person name="Mach L."/>
            <person name="Strasser R."/>
        </authorList>
    </citation>
    <scope>IDENTIFICATION</scope>
</reference>
<reference key="5">
    <citation type="journal article" date="2014" name="Plant Cell">
        <title>Arabidopsis class I alpha-mannosidases MNS4 and MNS5 are involved in endoplasmic reticulum-associated degradation of misfolded glycoproteins.</title>
        <authorList>
            <person name="Huettner S."/>
            <person name="Veit C."/>
            <person name="Vavra U."/>
            <person name="Schoberer J."/>
            <person name="Liebminger E."/>
            <person name="Maresch D."/>
            <person name="Grass J."/>
            <person name="Altmann F."/>
            <person name="Mach L."/>
            <person name="Strasser R."/>
        </authorList>
    </citation>
    <scope>FUNCTION</scope>
    <scope>SUBCELLULAR LOCATION</scope>
    <scope>MUTAGENESIS OF GLU-388</scope>
</reference>
<comment type="function">
    <text evidence="6">Can convert Man(9)GlcNAc(2) and Man(8)GlcNAc(2) into N-glycans with a terminal alpha-1,6-linked Man residue in the C-branch. Functions in the formation of unique N-glycan structures that are specifically recognized by components of the endoplasmic reticulum-associated degradation (ERAD) machinery, which leads to the degradation of misfolded glycoproteins. Most likely generates N-glycan signal on misfolded glycoproteins that is subsequently recognized by OS9. Required for ERAD of the heavily glycosylated and misfolded BRI1 variants BRI1-5 and BRI1-9. Does not seem to play role in N-glycan processing of correctly folded proteins destined for secretion.</text>
</comment>
<comment type="cofactor">
    <cofactor evidence="4">
        <name>Ca(2+)</name>
        <dbReference type="ChEBI" id="CHEBI:29108"/>
    </cofactor>
</comment>
<comment type="pathway">
    <text evidence="7">Protein modification; protein glycosylation.</text>
</comment>
<comment type="subcellular location">
    <subcellularLocation>
        <location evidence="6">Endoplasmic reticulum membrane</location>
        <topology evidence="7">Single-pass type II membrane protein</topology>
    </subcellularLocation>
</comment>
<comment type="similarity">
    <text evidence="7">Belongs to the glycosyl hydrolase 47 family.</text>
</comment>
<sequence length="574" mass="65708">MSCPIHPRRLFLCLLISLTFFVVDPSSQHIEVKKKQMREKVREMFYHAYDNYMTYAFPHDELKPLTKSFTDSLSELGNLKLEHLPTDYNGSAVTLVESLSSLAILGNSTEFEKGVLWLSENLTFDIDARVNLFECNIRVLGGLISAHLLAIDPNNRLIQGSYNNQLLRLAEDLGKRFLPAFETPTGLPYAWINLKNGVMENETTETSTSGCGSLVLEMGALSRLTGDPRFESAALRALRQLWRMRSSLDLLGTTLDVVTGEWIEYSSSIGAGVDSFYEYLLKAYILFGKEDYWRMFHSAYLASQKYFRHGPWYHEANMWSGKPTYWQLTSLQAFWPGLQVLVGDIAAANSSHREFFHVWEKFGVLPERYLLDHQIIHPTMKYYPLRPELAESTFYLYQATKDPWYLDVGESMVKSLNLYTKVPGGFASVRDVTTMQLEDHQHSFFLAETCKYLYLLFDDSFVAKRNYIFTTEGHPIQVVSSWHEKLPETYFSGNWTLSKSGAWESRASALSLQVCPLISLNSRHPEQQRESACHVLDEQINHKCWSNKECGVDATTCRLRTCSGVGYCGLWNPL</sequence>
<protein>
    <recommendedName>
        <fullName>Alpha-mannosidase I MNS5</fullName>
        <ecNumber evidence="6">3.2.1.-</ecNumber>
    </recommendedName>
</protein>
<proteinExistence type="evidence at protein level"/>
<gene>
    <name type="primary">MNS5</name>
    <name type="ordered locus">At1g27520</name>
    <name type="ORF">T17H3.2</name>
</gene>
<evidence type="ECO:0000250" key="1"/>
<evidence type="ECO:0000250" key="2">
    <source>
        <dbReference type="UniProtKB" id="P31723"/>
    </source>
</evidence>
<evidence type="ECO:0000250" key="3">
    <source>
        <dbReference type="UniProtKB" id="P32906"/>
    </source>
</evidence>
<evidence type="ECO:0000250" key="4">
    <source>
        <dbReference type="UniProtKB" id="P45700"/>
    </source>
</evidence>
<evidence type="ECO:0000255" key="5"/>
<evidence type="ECO:0000269" key="6">
    <source>
    </source>
</evidence>
<evidence type="ECO:0000305" key="7"/>
<keyword id="KW-0256">Endoplasmic reticulum</keyword>
<keyword id="KW-0325">Glycoprotein</keyword>
<keyword id="KW-0378">Hydrolase</keyword>
<keyword id="KW-0472">Membrane</keyword>
<keyword id="KW-0479">Metal-binding</keyword>
<keyword id="KW-1185">Reference proteome</keyword>
<keyword id="KW-0735">Signal-anchor</keyword>
<keyword id="KW-0812">Transmembrane</keyword>
<keyword id="KW-1133">Transmembrane helix</keyword>
<name>MNS5_ARATH</name>
<feature type="chain" id="PRO_0000397937" description="Alpha-mannosidase I MNS5">
    <location>
        <begin position="1"/>
        <end position="574"/>
    </location>
</feature>
<feature type="topological domain" description="Cytoplasmic" evidence="5">
    <location>
        <begin position="1"/>
        <end position="9"/>
    </location>
</feature>
<feature type="transmembrane region" description="Helical; Signal-anchor for type II membrane protein" evidence="5">
    <location>
        <begin position="10"/>
        <end position="26"/>
    </location>
</feature>
<feature type="topological domain" description="Lumenal" evidence="5">
    <location>
        <begin position="27"/>
        <end position="574"/>
    </location>
</feature>
<feature type="active site" description="Proton donor" evidence="1">
    <location>
        <position position="134"/>
    </location>
</feature>
<feature type="active site" evidence="1">
    <location>
        <position position="274"/>
    </location>
</feature>
<feature type="active site" description="Proton donor" evidence="2">
    <location>
        <position position="367"/>
    </location>
</feature>
<feature type="active site" evidence="1">
    <location>
        <position position="388"/>
    </location>
</feature>
<feature type="binding site" evidence="3">
    <location>
        <position position="471"/>
    </location>
    <ligand>
        <name>Ca(2+)</name>
        <dbReference type="ChEBI" id="CHEBI:29108"/>
    </ligand>
</feature>
<feature type="glycosylation site" description="N-linked (GlcNAc...) asparagine" evidence="5">
    <location>
        <position position="89"/>
    </location>
</feature>
<feature type="glycosylation site" description="N-linked (GlcNAc...) asparagine" evidence="5">
    <location>
        <position position="107"/>
    </location>
</feature>
<feature type="glycosylation site" description="N-linked (GlcNAc...) asparagine" evidence="5">
    <location>
        <position position="121"/>
    </location>
</feature>
<feature type="glycosylation site" description="N-linked (GlcNAc...) asparagine" evidence="5">
    <location>
        <position position="201"/>
    </location>
</feature>
<feature type="glycosylation site" description="N-linked (GlcNAc...) asparagine" evidence="5">
    <location>
        <position position="349"/>
    </location>
</feature>
<feature type="glycosylation site" description="N-linked (GlcNAc...) asparagine" evidence="5">
    <location>
        <position position="494"/>
    </location>
</feature>
<feature type="mutagenesis site" description="Loss of activity." evidence="6">
    <original>E</original>
    <variation>Q</variation>
    <location>
        <position position="388"/>
    </location>
</feature>
<dbReference type="EC" id="3.2.1.-" evidence="6"/>
<dbReference type="EMBL" id="AC005916">
    <property type="protein sequence ID" value="AAD45990.1"/>
    <property type="molecule type" value="Genomic_DNA"/>
</dbReference>
<dbReference type="EMBL" id="CP002684">
    <property type="protein sequence ID" value="AEE30841.1"/>
    <property type="molecule type" value="Genomic_DNA"/>
</dbReference>
<dbReference type="EMBL" id="AY056382">
    <property type="protein sequence ID" value="AAL08238.1"/>
    <property type="molecule type" value="mRNA"/>
</dbReference>
<dbReference type="PIR" id="C86400">
    <property type="entry name" value="C86400"/>
</dbReference>
<dbReference type="RefSeq" id="NP_564288.1">
    <property type="nucleotide sequence ID" value="NM_102516.4"/>
</dbReference>
<dbReference type="SMR" id="Q9SXC9"/>
<dbReference type="FunCoup" id="Q9SXC9">
    <property type="interactions" value="2612"/>
</dbReference>
<dbReference type="STRING" id="3702.Q9SXC9"/>
<dbReference type="CAZy" id="GH47">
    <property type="family name" value="Glycoside Hydrolase Family 47"/>
</dbReference>
<dbReference type="TCDB" id="3.A.16.1.5">
    <property type="family name" value="the endoplasmic reticular retrotranslocon (er-rt) family"/>
</dbReference>
<dbReference type="GlyCosmos" id="Q9SXC9">
    <property type="glycosylation" value="6 sites, No reported glycans"/>
</dbReference>
<dbReference type="GlyGen" id="Q9SXC9">
    <property type="glycosylation" value="6 sites"/>
</dbReference>
<dbReference type="PaxDb" id="3702-AT1G27520.1"/>
<dbReference type="ProteomicsDB" id="238256"/>
<dbReference type="EnsemblPlants" id="AT1G27520.1">
    <property type="protein sequence ID" value="AT1G27520.1"/>
    <property type="gene ID" value="AT1G27520"/>
</dbReference>
<dbReference type="GeneID" id="839643"/>
<dbReference type="Gramene" id="AT1G27520.1">
    <property type="protein sequence ID" value="AT1G27520.1"/>
    <property type="gene ID" value="AT1G27520"/>
</dbReference>
<dbReference type="KEGG" id="ath:AT1G27520"/>
<dbReference type="Araport" id="AT1G27520"/>
<dbReference type="TAIR" id="AT1G27520">
    <property type="gene designation" value="MNS5"/>
</dbReference>
<dbReference type="eggNOG" id="KOG2429">
    <property type="taxonomic scope" value="Eukaryota"/>
</dbReference>
<dbReference type="HOGENOM" id="CLU_003818_5_6_1"/>
<dbReference type="InParanoid" id="Q9SXC9"/>
<dbReference type="OMA" id="EEFWRMF"/>
<dbReference type="PhylomeDB" id="Q9SXC9"/>
<dbReference type="UniPathway" id="UPA00378"/>
<dbReference type="PRO" id="PR:Q9SXC9"/>
<dbReference type="Proteomes" id="UP000006548">
    <property type="component" value="Chromosome 1"/>
</dbReference>
<dbReference type="ExpressionAtlas" id="Q9SXC9">
    <property type="expression patterns" value="baseline and differential"/>
</dbReference>
<dbReference type="GO" id="GO:0005783">
    <property type="term" value="C:endoplasmic reticulum"/>
    <property type="evidence" value="ECO:0000314"/>
    <property type="project" value="TAIR"/>
</dbReference>
<dbReference type="GO" id="GO:0005789">
    <property type="term" value="C:endoplasmic reticulum membrane"/>
    <property type="evidence" value="ECO:0007669"/>
    <property type="project" value="UniProtKB-SubCell"/>
</dbReference>
<dbReference type="GO" id="GO:0044322">
    <property type="term" value="C:endoplasmic reticulum quality control compartment"/>
    <property type="evidence" value="ECO:0007669"/>
    <property type="project" value="GOC"/>
</dbReference>
<dbReference type="GO" id="GO:0004559">
    <property type="term" value="F:alpha-mannosidase activity"/>
    <property type="evidence" value="ECO:0000315"/>
    <property type="project" value="TAIR"/>
</dbReference>
<dbReference type="GO" id="GO:0005509">
    <property type="term" value="F:calcium ion binding"/>
    <property type="evidence" value="ECO:0007669"/>
    <property type="project" value="InterPro"/>
</dbReference>
<dbReference type="GO" id="GO:0004571">
    <property type="term" value="F:mannosyl-oligosaccharide 1,2-alpha-mannosidase activity"/>
    <property type="evidence" value="ECO:0007669"/>
    <property type="project" value="InterPro"/>
</dbReference>
<dbReference type="GO" id="GO:0005975">
    <property type="term" value="P:carbohydrate metabolic process"/>
    <property type="evidence" value="ECO:0007669"/>
    <property type="project" value="InterPro"/>
</dbReference>
<dbReference type="GO" id="GO:1904380">
    <property type="term" value="P:endoplasmic reticulum mannose trimming"/>
    <property type="evidence" value="ECO:0007669"/>
    <property type="project" value="InterPro"/>
</dbReference>
<dbReference type="GO" id="GO:0006486">
    <property type="term" value="P:protein glycosylation"/>
    <property type="evidence" value="ECO:0007669"/>
    <property type="project" value="UniProtKB-UniPathway"/>
</dbReference>
<dbReference type="FunFam" id="1.50.10.10:FF:000016">
    <property type="entry name" value="alpha-1,2-Mannosidase"/>
    <property type="match status" value="1"/>
</dbReference>
<dbReference type="Gene3D" id="1.50.10.10">
    <property type="match status" value="1"/>
</dbReference>
<dbReference type="InterPro" id="IPR012341">
    <property type="entry name" value="6hp_glycosidase-like_sf"/>
</dbReference>
<dbReference type="InterPro" id="IPR044674">
    <property type="entry name" value="EDEM1/2/3"/>
</dbReference>
<dbReference type="InterPro" id="IPR001382">
    <property type="entry name" value="Glyco_hydro_47"/>
</dbReference>
<dbReference type="InterPro" id="IPR036026">
    <property type="entry name" value="Seven-hairpin_glycosidases"/>
</dbReference>
<dbReference type="PANTHER" id="PTHR45679:SF5">
    <property type="entry name" value="ER DEGRADATION-ENHANCING ALPHA-MANNOSIDASE-LIKE PROTEIN 1"/>
    <property type="match status" value="1"/>
</dbReference>
<dbReference type="PANTHER" id="PTHR45679">
    <property type="entry name" value="ER DEGRADATION-ENHANCING ALPHA-MANNOSIDASE-LIKE PROTEIN 2"/>
    <property type="match status" value="1"/>
</dbReference>
<dbReference type="Pfam" id="PF01532">
    <property type="entry name" value="Glyco_hydro_47"/>
    <property type="match status" value="1"/>
</dbReference>
<dbReference type="PRINTS" id="PR00747">
    <property type="entry name" value="GLYHDRLASE47"/>
</dbReference>
<dbReference type="SUPFAM" id="SSF48225">
    <property type="entry name" value="Seven-hairpin glycosidases"/>
    <property type="match status" value="1"/>
</dbReference>
<organism>
    <name type="scientific">Arabidopsis thaliana</name>
    <name type="common">Mouse-ear cress</name>
    <dbReference type="NCBI Taxonomy" id="3702"/>
    <lineage>
        <taxon>Eukaryota</taxon>
        <taxon>Viridiplantae</taxon>
        <taxon>Streptophyta</taxon>
        <taxon>Embryophyta</taxon>
        <taxon>Tracheophyta</taxon>
        <taxon>Spermatophyta</taxon>
        <taxon>Magnoliopsida</taxon>
        <taxon>eudicotyledons</taxon>
        <taxon>Gunneridae</taxon>
        <taxon>Pentapetalae</taxon>
        <taxon>rosids</taxon>
        <taxon>malvids</taxon>
        <taxon>Brassicales</taxon>
        <taxon>Brassicaceae</taxon>
        <taxon>Camelineae</taxon>
        <taxon>Arabidopsis</taxon>
    </lineage>
</organism>